<organism>
    <name type="scientific">Agaricus bisporus</name>
    <name type="common">White button mushroom</name>
    <dbReference type="NCBI Taxonomy" id="5341"/>
    <lineage>
        <taxon>Eukaryota</taxon>
        <taxon>Fungi</taxon>
        <taxon>Dikarya</taxon>
        <taxon>Basidiomycota</taxon>
        <taxon>Agaricomycotina</taxon>
        <taxon>Agaricomycetes</taxon>
        <taxon>Agaricomycetidae</taxon>
        <taxon>Agaricales</taxon>
        <taxon>Agaricineae</taxon>
        <taxon>Agaricaceae</taxon>
        <taxon>Agaricus</taxon>
    </lineage>
</organism>
<sequence length="576" mass="66267">MSDKKSLMPLVGIPGEIKNRLNILDFVKNDKFFTLYVRALQVLQARDQSDYSSFFQLGGIHGLPYTEWAKAQPQLHLYKANYCTHGTVLFPTWHRAYESTWEQTLWEAAGTVAQRFTTSDQAEWIQAAKDLRQPFWDWGYWPNDPDFIGLPDQVIRDKQVEITDYNGTKIEVENPILHYKFHPIEPTFEGDFAQWQTTMRYPDVQKQENIEGMIAGIKAAAPGFREWTFNMLTKNYTWELFSNHGAVVGAHANSLEMVHNTVHFLIGRDPTLDPLVPGHMGSVPHAAFDPIFWMHHCNVDRLLALWQTMNYDVYVSEGMNREATMGLIPGQVLTEDSPLEPFYTKNQDPWQSDDLEDWETLGFSYPDFDPVKGKSKEEKSVYINDWVHKHYGFVTTQTENPALRLLSSFQRAKSDHETQYALYDWVIHATFRYYELNNSFSIIFYFDEGEGCTLESIIGTVDAFRGTTSENCANCARSQDLIAEGFVHLNYYIGCDIGQHADHEDDAVPLYEPTRVKEYLKKRKIGCKVVSAEGELTSLVVEIKGAPYYLPVGEARPKLDHEKPIVILDDIIHRVN</sequence>
<evidence type="ECO:0000250" key="1"/>
<evidence type="ECO:0000269" key="2">
    <source>
    </source>
</evidence>
<evidence type="ECO:0000305" key="3"/>
<evidence type="ECO:0007829" key="4">
    <source>
        <dbReference type="PDB" id="2Y9W"/>
    </source>
</evidence>
<evidence type="ECO:0007829" key="5">
    <source>
        <dbReference type="PDB" id="2Y9X"/>
    </source>
</evidence>
<reference key="1">
    <citation type="journal article" date="2010" name="Biotechnol. Lett.">
        <title>Cloning, characterization and expression of two new polyphenol oxidase cDNAs from Agaricus bisporus.</title>
        <authorList>
            <person name="Wu J."/>
            <person name="Chen H."/>
            <person name="Gao J."/>
            <person name="Liu X."/>
            <person name="Cheng W."/>
            <person name="Ma X."/>
        </authorList>
    </citation>
    <scope>NUCLEOTIDE SEQUENCE [MRNA]</scope>
</reference>
<reference key="2">
    <citation type="submission" date="2010-02" db="EMBL/GenBank/DDBJ databases">
        <title>Molecular cloning and characterization of two polyphenoloxidase genes from the mushrooms Agaricus bisporus.</title>
        <authorList>
            <person name="Li N.Y."/>
            <person name="Cai W.M."/>
            <person name="Liu C.Y."/>
            <person name="Ran F.L."/>
        </authorList>
    </citation>
    <scope>NUCLEOTIDE SEQUENCE [GENOMIC DNA]</scope>
    <source>
        <strain>As2796</strain>
    </source>
</reference>
<reference key="3">
    <citation type="journal article" date="2011" name="Biochemistry">
        <title>Crystal structure of Agaricus bisporus mushroom tyrosinase: identity of the tetramer subunits and interaction with tropolone.</title>
        <authorList>
            <person name="Ismaya W.T."/>
            <person name="Rozeboom H.J."/>
            <person name="Weijn A."/>
            <person name="Mes J.J."/>
            <person name="Fusetti F."/>
            <person name="Wichers H.J."/>
            <person name="Dijkstra B.W."/>
        </authorList>
    </citation>
    <scope>X-RAY CRYSTALLOGRAPHY (2.30 ANGSTROMS) OF 2-392 IN COMPLEX WITH SUBSTRATE</scope>
    <scope>COFACTOR</scope>
    <scope>THIOESTER BOND</scope>
</reference>
<proteinExistence type="evidence at protein level"/>
<accession>C7FF04</accession>
<accession>D5LK97</accession>
<keyword id="KW-0002">3D-structure</keyword>
<keyword id="KW-0186">Copper</keyword>
<keyword id="KW-0470">Melanin biosynthesis</keyword>
<keyword id="KW-0479">Metal-binding</keyword>
<keyword id="KW-0503">Monooxygenase</keyword>
<keyword id="KW-0560">Oxidoreductase</keyword>
<keyword id="KW-0883">Thioether bond</keyword>
<feature type="chain" id="PRO_0000416864" description="Polyphenol oxidase 3">
    <location>
        <begin position="1"/>
        <end position="392"/>
    </location>
</feature>
<feature type="propeptide" id="PRO_0000416865" description="Removed in mature form" evidence="3">
    <location>
        <begin position="393"/>
        <end position="576"/>
    </location>
</feature>
<feature type="binding site" evidence="2">
    <location>
        <position position="61"/>
    </location>
    <ligand>
        <name>Cu cation</name>
        <dbReference type="ChEBI" id="CHEBI:23378"/>
        <label>1</label>
    </ligand>
</feature>
<feature type="binding site" evidence="2">
    <location>
        <position position="85"/>
    </location>
    <ligand>
        <name>Cu cation</name>
        <dbReference type="ChEBI" id="CHEBI:23378"/>
        <label>1</label>
    </ligand>
</feature>
<feature type="binding site" evidence="2">
    <location>
        <position position="94"/>
    </location>
    <ligand>
        <name>Cu cation</name>
        <dbReference type="ChEBI" id="CHEBI:23378"/>
        <label>1</label>
    </ligand>
</feature>
<feature type="binding site" evidence="2">
    <location>
        <position position="259"/>
    </location>
    <ligand>
        <name>Cu cation</name>
        <dbReference type="ChEBI" id="CHEBI:23378"/>
        <label>2</label>
    </ligand>
</feature>
<feature type="binding site" evidence="2">
    <location>
        <position position="263"/>
    </location>
    <ligand>
        <name>Cu cation</name>
        <dbReference type="ChEBI" id="CHEBI:23378"/>
        <label>2</label>
    </ligand>
</feature>
<feature type="binding site" evidence="2">
    <location>
        <position position="263"/>
    </location>
    <ligand>
        <name>substrate</name>
    </ligand>
</feature>
<feature type="binding site" evidence="2">
    <location>
        <position position="296"/>
    </location>
    <ligand>
        <name>Cu cation</name>
        <dbReference type="ChEBI" id="CHEBI:23378"/>
        <label>2</label>
    </ligand>
</feature>
<feature type="site" description="Cleavage" evidence="3">
    <location>
        <begin position="392"/>
        <end position="393"/>
    </location>
</feature>
<feature type="cross-link" description="2'-(S-cysteinyl)-histidine (Cys-His)" evidence="2">
    <location>
        <begin position="83"/>
        <end position="85"/>
    </location>
</feature>
<feature type="sequence conflict" description="In Ref. 2; ADE67053." evidence="3" ref="2">
    <original>W</original>
    <variation>C</variation>
    <location>
        <position position="106"/>
    </location>
</feature>
<feature type="strand" evidence="4">
    <location>
        <begin position="6"/>
        <end position="8"/>
    </location>
</feature>
<feature type="helix" evidence="4">
    <location>
        <begin position="23"/>
        <end position="26"/>
    </location>
</feature>
<feature type="helix" evidence="4">
    <location>
        <begin position="30"/>
        <end position="45"/>
    </location>
</feature>
<feature type="helix" evidence="4">
    <location>
        <begin position="54"/>
        <end position="59"/>
    </location>
</feature>
<feature type="strand" evidence="4">
    <location>
        <begin position="62"/>
        <end position="64"/>
    </location>
</feature>
<feature type="strand" evidence="4">
    <location>
        <begin position="69"/>
        <end position="72"/>
    </location>
</feature>
<feature type="helix" evidence="4">
    <location>
        <begin position="90"/>
        <end position="113"/>
    </location>
</feature>
<feature type="helix" evidence="4">
    <location>
        <begin position="121"/>
        <end position="130"/>
    </location>
</feature>
<feature type="helix" evidence="4">
    <location>
        <begin position="152"/>
        <end position="155"/>
    </location>
</feature>
<feature type="strand" evidence="4">
    <location>
        <begin position="158"/>
        <end position="163"/>
    </location>
</feature>
<feature type="strand" evidence="4">
    <location>
        <begin position="169"/>
        <end position="173"/>
    </location>
</feature>
<feature type="turn" evidence="4">
    <location>
        <begin position="175"/>
        <end position="177"/>
    </location>
</feature>
<feature type="helix" evidence="4">
    <location>
        <begin position="191"/>
        <end position="194"/>
    </location>
</feature>
<feature type="strand" evidence="4">
    <location>
        <begin position="200"/>
        <end position="202"/>
    </location>
</feature>
<feature type="strand" evidence="5">
    <location>
        <begin position="206"/>
        <end position="208"/>
    </location>
</feature>
<feature type="helix" evidence="4">
    <location>
        <begin position="210"/>
        <end position="233"/>
    </location>
</feature>
<feature type="helix" evidence="4">
    <location>
        <begin position="238"/>
        <end position="242"/>
    </location>
</feature>
<feature type="turn" evidence="4">
    <location>
        <begin position="245"/>
        <end position="249"/>
    </location>
</feature>
<feature type="helix" evidence="4">
    <location>
        <begin position="255"/>
        <end position="267"/>
    </location>
</feature>
<feature type="helix" evidence="4">
    <location>
        <begin position="279"/>
        <end position="281"/>
    </location>
</feature>
<feature type="turn" evidence="4">
    <location>
        <begin position="283"/>
        <end position="285"/>
    </location>
</feature>
<feature type="helix" evidence="4">
    <location>
        <begin position="286"/>
        <end position="288"/>
    </location>
</feature>
<feature type="helix" evidence="4">
    <location>
        <begin position="291"/>
        <end position="309"/>
    </location>
</feature>
<feature type="turn" evidence="4">
    <location>
        <begin position="310"/>
        <end position="312"/>
    </location>
</feature>
<feature type="strand" evidence="5">
    <location>
        <begin position="318"/>
        <end position="320"/>
    </location>
</feature>
<feature type="strand" evidence="5">
    <location>
        <begin position="325"/>
        <end position="327"/>
    </location>
</feature>
<feature type="strand" evidence="5">
    <location>
        <begin position="331"/>
        <end position="333"/>
    </location>
</feature>
<feature type="strand" evidence="4">
    <location>
        <begin position="337"/>
        <end position="343"/>
    </location>
</feature>
<feature type="strand" evidence="4">
    <location>
        <begin position="349"/>
        <end position="351"/>
    </location>
</feature>
<feature type="helix" evidence="4">
    <location>
        <begin position="352"/>
        <end position="355"/>
    </location>
</feature>
<feature type="helix" evidence="4">
    <location>
        <begin position="358"/>
        <end position="361"/>
    </location>
</feature>
<feature type="strand" evidence="5">
    <location>
        <begin position="362"/>
        <end position="364"/>
    </location>
</feature>
<feature type="helix" evidence="4">
    <location>
        <begin position="366"/>
        <end position="371"/>
    </location>
</feature>
<feature type="helix" evidence="4">
    <location>
        <begin position="376"/>
        <end position="391"/>
    </location>
</feature>
<name>PPO3_AGABI</name>
<comment type="function">
    <text evidence="1">Copper-containing oxidase that catalyzes both the o-hydroxylation of monophenols and the subsequent oxidation of the resulting o-diphenols into reactive o-quinones, which evolve spontaneously to produce intermediates, which associate in dark brown pigments. Involved in the initial step of melanin synthesis. Melanins constitute a mechanism of defense and resistance to stress such as UV radiations, free radicals, gamma rays, dehydratation and extreme temperatures, and contribute to the fungal cell-wall resistance against hydrolytic enzymes in avoiding cellular lysis. Fungal pigments are also involved in the formation and stability of spores (By similarity).</text>
</comment>
<comment type="catalytic activity">
    <reaction>
        <text>2 L-dopa + O2 = 2 L-dopaquinone + 2 H2O</text>
        <dbReference type="Rhea" id="RHEA:34287"/>
        <dbReference type="ChEBI" id="CHEBI:15377"/>
        <dbReference type="ChEBI" id="CHEBI:15379"/>
        <dbReference type="ChEBI" id="CHEBI:57504"/>
        <dbReference type="ChEBI" id="CHEBI:57924"/>
        <dbReference type="EC" id="1.14.18.1"/>
    </reaction>
</comment>
<comment type="catalytic activity">
    <reaction>
        <text>L-tyrosine + O2 = L-dopaquinone + H2O</text>
        <dbReference type="Rhea" id="RHEA:18117"/>
        <dbReference type="ChEBI" id="CHEBI:15377"/>
        <dbReference type="ChEBI" id="CHEBI:15379"/>
        <dbReference type="ChEBI" id="CHEBI:57924"/>
        <dbReference type="ChEBI" id="CHEBI:58315"/>
        <dbReference type="EC" id="1.14.18.1"/>
    </reaction>
</comment>
<comment type="cofactor">
    <cofactor evidence="2">
        <name>Cu(2+)</name>
        <dbReference type="ChEBI" id="CHEBI:29036"/>
    </cofactor>
    <text evidence="2">Binds 2 copper ions per subunit.</text>
</comment>
<comment type="subunit">
    <text evidence="2">Tetramer composed of two subunits of PPO3 (H subunits) and two subunits of the as yet uncharacterized product of ORF239342 (L subunits).</text>
</comment>
<comment type="PTM">
    <text>The C-ter is probably cleaved after Gly-392 since the mature active protein is smaller than the protein encoded by the gene.</text>
</comment>
<comment type="similarity">
    <text evidence="3">Belongs to the tyrosinase family.</text>
</comment>
<dbReference type="EC" id="1.14.18.1"/>
<dbReference type="EMBL" id="GQ354801">
    <property type="protein sequence ID" value="ACU29457.1"/>
    <property type="molecule type" value="mRNA"/>
</dbReference>
<dbReference type="EMBL" id="GU936494">
    <property type="protein sequence ID" value="ADE67053.1"/>
    <property type="molecule type" value="Genomic_DNA"/>
</dbReference>
<dbReference type="PDB" id="2Y9W">
    <property type="method" value="X-ray"/>
    <property type="resolution" value="2.30 A"/>
    <property type="chains" value="A/B=2-392"/>
</dbReference>
<dbReference type="PDB" id="2Y9X">
    <property type="method" value="X-ray"/>
    <property type="resolution" value="2.78 A"/>
    <property type="chains" value="A/B/C/D=2-392"/>
</dbReference>
<dbReference type="PDBsum" id="2Y9W"/>
<dbReference type="PDBsum" id="2Y9X"/>
<dbReference type="SMR" id="C7FF04"/>
<dbReference type="BRENDA" id="1.14.18.1">
    <property type="organism ID" value="178"/>
</dbReference>
<dbReference type="EvolutionaryTrace" id="C7FF04"/>
<dbReference type="GO" id="GO:0046872">
    <property type="term" value="F:metal ion binding"/>
    <property type="evidence" value="ECO:0007669"/>
    <property type="project" value="UniProtKB-KW"/>
</dbReference>
<dbReference type="GO" id="GO:0004503">
    <property type="term" value="F:tyrosinase activity"/>
    <property type="evidence" value="ECO:0007669"/>
    <property type="project" value="UniProtKB-EC"/>
</dbReference>
<dbReference type="GO" id="GO:0042438">
    <property type="term" value="P:melanin biosynthetic process"/>
    <property type="evidence" value="ECO:0007669"/>
    <property type="project" value="UniProtKB-KW"/>
</dbReference>
<dbReference type="Gene3D" id="2.60.310.20">
    <property type="match status" value="1"/>
</dbReference>
<dbReference type="Gene3D" id="1.10.1280.10">
    <property type="entry name" value="Di-copper center containing domain from catechol oxidase"/>
    <property type="match status" value="1"/>
</dbReference>
<dbReference type="InterPro" id="IPR008922">
    <property type="entry name" value="Di-copper_centre_dom_sf"/>
</dbReference>
<dbReference type="InterPro" id="IPR050316">
    <property type="entry name" value="Tyrosinase/Hemocyanin"/>
</dbReference>
<dbReference type="InterPro" id="IPR041640">
    <property type="entry name" value="Tyrosinase_C"/>
</dbReference>
<dbReference type="InterPro" id="IPR002227">
    <property type="entry name" value="Tyrosinase_Cu-bd"/>
</dbReference>
<dbReference type="PANTHER" id="PTHR11474:SF76">
    <property type="entry name" value="SHKT DOMAIN-CONTAINING PROTEIN"/>
    <property type="match status" value="1"/>
</dbReference>
<dbReference type="PANTHER" id="PTHR11474">
    <property type="entry name" value="TYROSINASE FAMILY MEMBER"/>
    <property type="match status" value="1"/>
</dbReference>
<dbReference type="Pfam" id="PF00264">
    <property type="entry name" value="Tyrosinase"/>
    <property type="match status" value="1"/>
</dbReference>
<dbReference type="Pfam" id="PF18132">
    <property type="entry name" value="Tyrosinase_C"/>
    <property type="match status" value="1"/>
</dbReference>
<dbReference type="PRINTS" id="PR00092">
    <property type="entry name" value="TYROSINASE"/>
</dbReference>
<dbReference type="SUPFAM" id="SSF48056">
    <property type="entry name" value="Di-copper centre-containing domain"/>
    <property type="match status" value="1"/>
</dbReference>
<dbReference type="PROSITE" id="PS00498">
    <property type="entry name" value="TYROSINASE_2"/>
    <property type="match status" value="1"/>
</dbReference>
<gene>
    <name type="primary">PPO3</name>
</gene>
<protein>
    <recommendedName>
        <fullName>Polyphenol oxidase 3</fullName>
        <shortName>PPO3</shortName>
        <shortName>Phenolase 3</shortName>
        <ecNumber>1.14.18.1</ecNumber>
    </recommendedName>
    <alternativeName>
        <fullName>Cresolase</fullName>
    </alternativeName>
    <alternativeName>
        <fullName>Tyrosinase 3</fullName>
    </alternativeName>
</protein>